<name>CYB_DIPNI</name>
<organism>
    <name type="scientific">Dipodomys nitratoides</name>
    <name type="common">Fresno kangaroo rat</name>
    <dbReference type="NCBI Taxonomy" id="323374"/>
    <lineage>
        <taxon>Eukaryota</taxon>
        <taxon>Metazoa</taxon>
        <taxon>Chordata</taxon>
        <taxon>Craniata</taxon>
        <taxon>Vertebrata</taxon>
        <taxon>Euteleostomi</taxon>
        <taxon>Mammalia</taxon>
        <taxon>Eutheria</taxon>
        <taxon>Euarchontoglires</taxon>
        <taxon>Glires</taxon>
        <taxon>Rodentia</taxon>
        <taxon>Castorimorpha</taxon>
        <taxon>Heteromyidae</taxon>
        <taxon>Dipodomyinae</taxon>
        <taxon>Dipodomys</taxon>
    </lineage>
</organism>
<sequence length="379" mass="42970">MTIMRKTHPLMKMVNHAFIDLPTPSNISGWWNFGSLLGLCLIIQIASGLFLAMHYTPDTMTAFSSVTHICRDVNYGWLIRYMHANGASLFFICLYLHIGRGIYYGSYSYMETWNIGIILLFLTMATAFMGYVLPWGQMSFWGATVITNLLSAIPYIGTDLVEWIWGGFSVDKATLNRFFAFHFILPFIIAAMAMVHLLFLHETGSNNPLGIPSDCDKIPFHPYYTTKDFLGIILLLAFFFTLVLFFPDLLGDPDNYSPANPLNTPPHIKPEWYFLFAYAILRSIPNKLGGVIALVLSILILALLPHIQTAKQRSLMFRPISQFLFWLLVSDVLVLTWIGGQPVEPPFIIIGQIASLLYFTIILAFMPIAGLIENKMLKW</sequence>
<geneLocation type="mitochondrion"/>
<proteinExistence type="inferred from homology"/>
<dbReference type="EMBL" id="AY926372">
    <property type="protein sequence ID" value="AAY23215.1"/>
    <property type="molecule type" value="Genomic_DNA"/>
</dbReference>
<dbReference type="SMR" id="Q508N1"/>
<dbReference type="GO" id="GO:0005743">
    <property type="term" value="C:mitochondrial inner membrane"/>
    <property type="evidence" value="ECO:0007669"/>
    <property type="project" value="UniProtKB-SubCell"/>
</dbReference>
<dbReference type="GO" id="GO:0045275">
    <property type="term" value="C:respiratory chain complex III"/>
    <property type="evidence" value="ECO:0007669"/>
    <property type="project" value="InterPro"/>
</dbReference>
<dbReference type="GO" id="GO:0046872">
    <property type="term" value="F:metal ion binding"/>
    <property type="evidence" value="ECO:0007669"/>
    <property type="project" value="UniProtKB-KW"/>
</dbReference>
<dbReference type="GO" id="GO:0008121">
    <property type="term" value="F:ubiquinol-cytochrome-c reductase activity"/>
    <property type="evidence" value="ECO:0007669"/>
    <property type="project" value="InterPro"/>
</dbReference>
<dbReference type="GO" id="GO:0006122">
    <property type="term" value="P:mitochondrial electron transport, ubiquinol to cytochrome c"/>
    <property type="evidence" value="ECO:0007669"/>
    <property type="project" value="TreeGrafter"/>
</dbReference>
<dbReference type="CDD" id="cd00290">
    <property type="entry name" value="cytochrome_b_C"/>
    <property type="match status" value="1"/>
</dbReference>
<dbReference type="CDD" id="cd00284">
    <property type="entry name" value="Cytochrome_b_N"/>
    <property type="match status" value="1"/>
</dbReference>
<dbReference type="FunFam" id="1.20.810.10:FF:000002">
    <property type="entry name" value="Cytochrome b"/>
    <property type="match status" value="1"/>
</dbReference>
<dbReference type="Gene3D" id="1.20.810.10">
    <property type="entry name" value="Cytochrome Bc1 Complex, Chain C"/>
    <property type="match status" value="1"/>
</dbReference>
<dbReference type="InterPro" id="IPR005798">
    <property type="entry name" value="Cyt_b/b6_C"/>
</dbReference>
<dbReference type="InterPro" id="IPR036150">
    <property type="entry name" value="Cyt_b/b6_C_sf"/>
</dbReference>
<dbReference type="InterPro" id="IPR005797">
    <property type="entry name" value="Cyt_b/b6_N"/>
</dbReference>
<dbReference type="InterPro" id="IPR027387">
    <property type="entry name" value="Cytb/b6-like_sf"/>
</dbReference>
<dbReference type="InterPro" id="IPR030689">
    <property type="entry name" value="Cytochrome_b"/>
</dbReference>
<dbReference type="InterPro" id="IPR048260">
    <property type="entry name" value="Cytochrome_b_C_euk/bac"/>
</dbReference>
<dbReference type="InterPro" id="IPR048259">
    <property type="entry name" value="Cytochrome_b_N_euk/bac"/>
</dbReference>
<dbReference type="InterPro" id="IPR016174">
    <property type="entry name" value="Di-haem_cyt_TM"/>
</dbReference>
<dbReference type="PANTHER" id="PTHR19271">
    <property type="entry name" value="CYTOCHROME B"/>
    <property type="match status" value="1"/>
</dbReference>
<dbReference type="PANTHER" id="PTHR19271:SF16">
    <property type="entry name" value="CYTOCHROME B"/>
    <property type="match status" value="1"/>
</dbReference>
<dbReference type="Pfam" id="PF00032">
    <property type="entry name" value="Cytochrom_B_C"/>
    <property type="match status" value="1"/>
</dbReference>
<dbReference type="Pfam" id="PF00033">
    <property type="entry name" value="Cytochrome_B"/>
    <property type="match status" value="1"/>
</dbReference>
<dbReference type="PIRSF" id="PIRSF038885">
    <property type="entry name" value="COB"/>
    <property type="match status" value="1"/>
</dbReference>
<dbReference type="SUPFAM" id="SSF81648">
    <property type="entry name" value="a domain/subunit of cytochrome bc1 complex (Ubiquinol-cytochrome c reductase)"/>
    <property type="match status" value="1"/>
</dbReference>
<dbReference type="SUPFAM" id="SSF81342">
    <property type="entry name" value="Transmembrane di-heme cytochromes"/>
    <property type="match status" value="1"/>
</dbReference>
<dbReference type="PROSITE" id="PS51003">
    <property type="entry name" value="CYTB_CTER"/>
    <property type="match status" value="1"/>
</dbReference>
<dbReference type="PROSITE" id="PS51002">
    <property type="entry name" value="CYTB_NTER"/>
    <property type="match status" value="1"/>
</dbReference>
<accession>Q508N1</accession>
<protein>
    <recommendedName>
        <fullName>Cytochrome b</fullName>
    </recommendedName>
    <alternativeName>
        <fullName>Complex III subunit 3</fullName>
    </alternativeName>
    <alternativeName>
        <fullName>Complex III subunit III</fullName>
    </alternativeName>
    <alternativeName>
        <fullName>Cytochrome b-c1 complex subunit 3</fullName>
    </alternativeName>
    <alternativeName>
        <fullName>Ubiquinol-cytochrome-c reductase complex cytochrome b subunit</fullName>
    </alternativeName>
</protein>
<reference key="1">
    <citation type="journal article" date="2005" name="J. Mammal.">
        <title>Phylogenetics of the new world rodent family Heteromyidae.</title>
        <authorList>
            <person name="Alexander L.F."/>
            <person name="Riddle B.R."/>
        </authorList>
    </citation>
    <scope>NUCLEOTIDE SEQUENCE [GENOMIC DNA]</scope>
    <source>
        <strain>Isolate LVT 2045</strain>
    </source>
</reference>
<feature type="chain" id="PRO_0000255044" description="Cytochrome b">
    <location>
        <begin position="1"/>
        <end position="379"/>
    </location>
</feature>
<feature type="transmembrane region" description="Helical" evidence="2">
    <location>
        <begin position="33"/>
        <end position="53"/>
    </location>
</feature>
<feature type="transmembrane region" description="Helical" evidence="2">
    <location>
        <begin position="77"/>
        <end position="98"/>
    </location>
</feature>
<feature type="transmembrane region" description="Helical" evidence="2">
    <location>
        <begin position="113"/>
        <end position="133"/>
    </location>
</feature>
<feature type="transmembrane region" description="Helical" evidence="2">
    <location>
        <begin position="178"/>
        <end position="198"/>
    </location>
</feature>
<feature type="transmembrane region" description="Helical" evidence="2">
    <location>
        <begin position="226"/>
        <end position="246"/>
    </location>
</feature>
<feature type="transmembrane region" description="Helical" evidence="2">
    <location>
        <begin position="288"/>
        <end position="308"/>
    </location>
</feature>
<feature type="transmembrane region" description="Helical" evidence="2">
    <location>
        <begin position="320"/>
        <end position="340"/>
    </location>
</feature>
<feature type="transmembrane region" description="Helical" evidence="2">
    <location>
        <begin position="347"/>
        <end position="367"/>
    </location>
</feature>
<feature type="binding site" description="axial binding residue" evidence="2">
    <location>
        <position position="83"/>
    </location>
    <ligand>
        <name>heme b</name>
        <dbReference type="ChEBI" id="CHEBI:60344"/>
        <label>b562</label>
    </ligand>
    <ligandPart>
        <name>Fe</name>
        <dbReference type="ChEBI" id="CHEBI:18248"/>
    </ligandPart>
</feature>
<feature type="binding site" description="axial binding residue" evidence="2">
    <location>
        <position position="97"/>
    </location>
    <ligand>
        <name>heme b</name>
        <dbReference type="ChEBI" id="CHEBI:60344"/>
        <label>b566</label>
    </ligand>
    <ligandPart>
        <name>Fe</name>
        <dbReference type="ChEBI" id="CHEBI:18248"/>
    </ligandPart>
</feature>
<feature type="binding site" description="axial binding residue" evidence="2">
    <location>
        <position position="182"/>
    </location>
    <ligand>
        <name>heme b</name>
        <dbReference type="ChEBI" id="CHEBI:60344"/>
        <label>b562</label>
    </ligand>
    <ligandPart>
        <name>Fe</name>
        <dbReference type="ChEBI" id="CHEBI:18248"/>
    </ligandPart>
</feature>
<feature type="binding site" description="axial binding residue" evidence="2">
    <location>
        <position position="196"/>
    </location>
    <ligand>
        <name>heme b</name>
        <dbReference type="ChEBI" id="CHEBI:60344"/>
        <label>b566</label>
    </ligand>
    <ligandPart>
        <name>Fe</name>
        <dbReference type="ChEBI" id="CHEBI:18248"/>
    </ligandPart>
</feature>
<feature type="binding site" evidence="2">
    <location>
        <position position="201"/>
    </location>
    <ligand>
        <name>a ubiquinone</name>
        <dbReference type="ChEBI" id="CHEBI:16389"/>
    </ligand>
</feature>
<evidence type="ECO:0000250" key="1"/>
<evidence type="ECO:0000250" key="2">
    <source>
        <dbReference type="UniProtKB" id="P00157"/>
    </source>
</evidence>
<evidence type="ECO:0000255" key="3">
    <source>
        <dbReference type="PROSITE-ProRule" id="PRU00967"/>
    </source>
</evidence>
<evidence type="ECO:0000255" key="4">
    <source>
        <dbReference type="PROSITE-ProRule" id="PRU00968"/>
    </source>
</evidence>
<keyword id="KW-0249">Electron transport</keyword>
<keyword id="KW-0349">Heme</keyword>
<keyword id="KW-0408">Iron</keyword>
<keyword id="KW-0472">Membrane</keyword>
<keyword id="KW-0479">Metal-binding</keyword>
<keyword id="KW-0496">Mitochondrion</keyword>
<keyword id="KW-0999">Mitochondrion inner membrane</keyword>
<keyword id="KW-0679">Respiratory chain</keyword>
<keyword id="KW-0812">Transmembrane</keyword>
<keyword id="KW-1133">Transmembrane helix</keyword>
<keyword id="KW-0813">Transport</keyword>
<keyword id="KW-0830">Ubiquinone</keyword>
<comment type="function">
    <text evidence="2">Component of the ubiquinol-cytochrome c reductase complex (complex III or cytochrome b-c1 complex) that is part of the mitochondrial respiratory chain. The b-c1 complex mediates electron transfer from ubiquinol to cytochrome c. Contributes to the generation of a proton gradient across the mitochondrial membrane that is then used for ATP synthesis.</text>
</comment>
<comment type="cofactor">
    <cofactor evidence="2">
        <name>heme b</name>
        <dbReference type="ChEBI" id="CHEBI:60344"/>
    </cofactor>
    <text evidence="2">Binds 2 heme b groups non-covalently.</text>
</comment>
<comment type="subunit">
    <text evidence="2">The cytochrome bc1 complex contains 11 subunits: 3 respiratory subunits (MT-CYB, CYC1 and UQCRFS1), 2 core proteins (UQCRC1 and UQCRC2) and 6 low-molecular weight proteins (UQCRH/QCR6, UQCRB/QCR7, UQCRQ/QCR8, UQCR10/QCR9, UQCR11/QCR10 and a cleavage product of UQCRFS1). This cytochrome bc1 complex then forms a dimer.</text>
</comment>
<comment type="subcellular location">
    <subcellularLocation>
        <location evidence="2">Mitochondrion inner membrane</location>
        <topology evidence="2">Multi-pass membrane protein</topology>
    </subcellularLocation>
</comment>
<comment type="miscellaneous">
    <text evidence="1">Heme 1 (or BL or b562) is low-potential and absorbs at about 562 nm, and heme 2 (or BH or b566) is high-potential and absorbs at about 566 nm.</text>
</comment>
<comment type="similarity">
    <text evidence="3 4">Belongs to the cytochrome b family.</text>
</comment>
<comment type="caution">
    <text evidence="2">The full-length protein contains only eight transmembrane helices, not nine as predicted by bioinformatics tools.</text>
</comment>
<gene>
    <name type="primary">MT-CYB</name>
    <name type="synonym">COB</name>
    <name type="synonym">CYTB</name>
    <name type="synonym">MTCYB</name>
</gene>